<keyword id="KW-0965">Cell junction</keyword>
<keyword id="KW-1003">Cell membrane</keyword>
<keyword id="KW-0268">Exocytosis</keyword>
<keyword id="KW-0472">Membrane</keyword>
<keyword id="KW-0628">Postsynaptic cell membrane</keyword>
<keyword id="KW-0653">Protein transport</keyword>
<keyword id="KW-1185">Reference proteome</keyword>
<keyword id="KW-0770">Synapse</keyword>
<keyword id="KW-0796">Tight junction</keyword>
<keyword id="KW-0813">Transport</keyword>
<reference key="1">
    <citation type="submission" date="2006-01" db="EMBL/GenBank/DDBJ databases">
        <authorList>
            <consortium name="NIH - Mammalian Gene Collection (MGC) project"/>
        </authorList>
    </citation>
    <scope>NUCLEOTIDE SEQUENCE [LARGE SCALE MRNA]</scope>
    <source>
        <strain>Hereford</strain>
        <tissue>Hypothalamus</tissue>
    </source>
</reference>
<evidence type="ECO:0000250" key="1"/>
<evidence type="ECO:0000250" key="2">
    <source>
        <dbReference type="UniProtKB" id="O88951"/>
    </source>
</evidence>
<evidence type="ECO:0000250" key="3">
    <source>
        <dbReference type="UniProtKB" id="Q9HAP6"/>
    </source>
</evidence>
<evidence type="ECO:0000250" key="4">
    <source>
        <dbReference type="UniProtKB" id="Q9Z252"/>
    </source>
</evidence>
<evidence type="ECO:0000255" key="5">
    <source>
        <dbReference type="PROSITE-ProRule" id="PRU00143"/>
    </source>
</evidence>
<evidence type="ECO:0000255" key="6">
    <source>
        <dbReference type="PROSITE-ProRule" id="PRU00365"/>
    </source>
</evidence>
<evidence type="ECO:0000305" key="7"/>
<feature type="chain" id="PRO_0000286351" description="Protein lin-7 homolog B">
    <location>
        <begin position="1"/>
        <end position="201"/>
    </location>
</feature>
<feature type="domain" description="L27" evidence="6">
    <location>
        <begin position="10"/>
        <end position="65"/>
    </location>
</feature>
<feature type="domain" description="PDZ" evidence="5">
    <location>
        <begin position="93"/>
        <end position="175"/>
    </location>
</feature>
<feature type="short sequence motif" description="Kinase interacting site" evidence="1">
    <location>
        <begin position="1"/>
        <end position="13"/>
    </location>
</feature>
<name>LIN7B_BOVIN</name>
<dbReference type="EMBL" id="BC112698">
    <property type="protein sequence ID" value="AAI12699.1"/>
    <property type="molecule type" value="mRNA"/>
</dbReference>
<dbReference type="RefSeq" id="NP_001040042.1">
    <property type="nucleotide sequence ID" value="NM_001046577.2"/>
</dbReference>
<dbReference type="SMR" id="Q2KIB6"/>
<dbReference type="FunCoup" id="Q2KIB6">
    <property type="interactions" value="1507"/>
</dbReference>
<dbReference type="STRING" id="9913.ENSBTAP00000056892"/>
<dbReference type="PaxDb" id="9913-ENSBTAP00000040675"/>
<dbReference type="GeneID" id="616283"/>
<dbReference type="KEGG" id="bta:616283"/>
<dbReference type="CTD" id="64130"/>
<dbReference type="VEuPathDB" id="HostDB:ENSBTAG00000023415"/>
<dbReference type="eggNOG" id="KOG3550">
    <property type="taxonomic scope" value="Eukaryota"/>
</dbReference>
<dbReference type="HOGENOM" id="CLU_097962_0_0_1"/>
<dbReference type="InParanoid" id="Q2KIB6"/>
<dbReference type="OMA" id="TDMATMT"/>
<dbReference type="OrthoDB" id="10029564at2759"/>
<dbReference type="TreeFam" id="TF316850"/>
<dbReference type="Reactome" id="R-BTA-212676">
    <property type="pathway name" value="Dopamine Neurotransmitter Release Cycle"/>
</dbReference>
<dbReference type="Reactome" id="R-BTA-5666185">
    <property type="pathway name" value="RHO GTPases Activate Rhotekin and Rhophilins"/>
</dbReference>
<dbReference type="Proteomes" id="UP000009136">
    <property type="component" value="Chromosome 18"/>
</dbReference>
<dbReference type="Bgee" id="ENSBTAG00000023415">
    <property type="expression patterns" value="Expressed in retina and 103 other cell types or tissues"/>
</dbReference>
<dbReference type="GO" id="GO:0016323">
    <property type="term" value="C:basolateral plasma membrane"/>
    <property type="evidence" value="ECO:0000318"/>
    <property type="project" value="GO_Central"/>
</dbReference>
<dbReference type="GO" id="GO:0005923">
    <property type="term" value="C:bicellular tight junction"/>
    <property type="evidence" value="ECO:0007669"/>
    <property type="project" value="UniProtKB-SubCell"/>
</dbReference>
<dbReference type="GO" id="GO:0005911">
    <property type="term" value="C:cell-cell junction"/>
    <property type="evidence" value="ECO:0000318"/>
    <property type="project" value="GO_Central"/>
</dbReference>
<dbReference type="GO" id="GO:0097025">
    <property type="term" value="C:MPP7-DLG1-LIN7 complex"/>
    <property type="evidence" value="ECO:0000318"/>
    <property type="project" value="GO_Central"/>
</dbReference>
<dbReference type="GO" id="GO:0098839">
    <property type="term" value="C:postsynaptic density membrane"/>
    <property type="evidence" value="ECO:0007669"/>
    <property type="project" value="UniProtKB-SubCell"/>
</dbReference>
<dbReference type="GO" id="GO:0098793">
    <property type="term" value="C:presynapse"/>
    <property type="evidence" value="ECO:0007669"/>
    <property type="project" value="GOC"/>
</dbReference>
<dbReference type="GO" id="GO:0045202">
    <property type="term" value="C:synapse"/>
    <property type="evidence" value="ECO:0000318"/>
    <property type="project" value="GO_Central"/>
</dbReference>
<dbReference type="GO" id="GO:0030674">
    <property type="term" value="F:protein-macromolecule adaptor activity"/>
    <property type="evidence" value="ECO:0000318"/>
    <property type="project" value="GO_Central"/>
</dbReference>
<dbReference type="GO" id="GO:0006887">
    <property type="term" value="P:exocytosis"/>
    <property type="evidence" value="ECO:0007669"/>
    <property type="project" value="UniProtKB-KW"/>
</dbReference>
<dbReference type="GO" id="GO:0007269">
    <property type="term" value="P:neurotransmitter secretion"/>
    <property type="evidence" value="ECO:0000318"/>
    <property type="project" value="GO_Central"/>
</dbReference>
<dbReference type="GO" id="GO:0015031">
    <property type="term" value="P:protein transport"/>
    <property type="evidence" value="ECO:0007669"/>
    <property type="project" value="UniProtKB-KW"/>
</dbReference>
<dbReference type="GO" id="GO:0008582">
    <property type="term" value="P:regulation of synaptic assembly at neuromuscular junction"/>
    <property type="evidence" value="ECO:0000318"/>
    <property type="project" value="GO_Central"/>
</dbReference>
<dbReference type="GO" id="GO:0048489">
    <property type="term" value="P:synaptic vesicle transport"/>
    <property type="evidence" value="ECO:0000318"/>
    <property type="project" value="GO_Central"/>
</dbReference>
<dbReference type="CDD" id="cd06796">
    <property type="entry name" value="PDZ_Lin-7-like"/>
    <property type="match status" value="1"/>
</dbReference>
<dbReference type="FunFam" id="2.30.42.10:FF:000039">
    <property type="entry name" value="Lin-7 homolog B"/>
    <property type="match status" value="1"/>
</dbReference>
<dbReference type="Gene3D" id="1.20.1270.460">
    <property type="match status" value="1"/>
</dbReference>
<dbReference type="Gene3D" id="2.30.42.10">
    <property type="match status" value="1"/>
</dbReference>
<dbReference type="InterPro" id="IPR014775">
    <property type="entry name" value="L27_C"/>
</dbReference>
<dbReference type="InterPro" id="IPR004172">
    <property type="entry name" value="L27_dom"/>
</dbReference>
<dbReference type="InterPro" id="IPR036892">
    <property type="entry name" value="L27_dom_sf"/>
</dbReference>
<dbReference type="InterPro" id="IPR017365">
    <property type="entry name" value="LIN7"/>
</dbReference>
<dbReference type="InterPro" id="IPR051109">
    <property type="entry name" value="MAM_complex_regulator"/>
</dbReference>
<dbReference type="InterPro" id="IPR001478">
    <property type="entry name" value="PDZ"/>
</dbReference>
<dbReference type="InterPro" id="IPR036034">
    <property type="entry name" value="PDZ_sf"/>
</dbReference>
<dbReference type="PANTHER" id="PTHR14063">
    <property type="entry name" value="PROTEIN LIN-7 HOMOLOG"/>
    <property type="match status" value="1"/>
</dbReference>
<dbReference type="Pfam" id="PF02828">
    <property type="entry name" value="L27"/>
    <property type="match status" value="1"/>
</dbReference>
<dbReference type="Pfam" id="PF00595">
    <property type="entry name" value="PDZ"/>
    <property type="match status" value="1"/>
</dbReference>
<dbReference type="PIRSF" id="PIRSF038039">
    <property type="entry name" value="Lin-7_homologue"/>
    <property type="match status" value="1"/>
</dbReference>
<dbReference type="SMART" id="SM00569">
    <property type="entry name" value="L27"/>
    <property type="match status" value="1"/>
</dbReference>
<dbReference type="SMART" id="SM00228">
    <property type="entry name" value="PDZ"/>
    <property type="match status" value="1"/>
</dbReference>
<dbReference type="SUPFAM" id="SSF101288">
    <property type="entry name" value="L27 domain"/>
    <property type="match status" value="1"/>
</dbReference>
<dbReference type="SUPFAM" id="SSF50156">
    <property type="entry name" value="PDZ domain-like"/>
    <property type="match status" value="1"/>
</dbReference>
<dbReference type="PROSITE" id="PS51022">
    <property type="entry name" value="L27"/>
    <property type="match status" value="1"/>
</dbReference>
<dbReference type="PROSITE" id="PS50106">
    <property type="entry name" value="PDZ"/>
    <property type="match status" value="1"/>
</dbReference>
<sequence length="201" mass="22280">MAALVEPLGLEREVSRAVELLERLQRSGELPPQKLQALQRVLQSRFCSAIREVYEQLYDTLDITGSAEIRAHATAKATVAAFTASEGHAHPRVVELPKTDEGLGFNIMGGKEQNSPIYISRVIPGGVADRHGGLKRGDQLLSVNGVSVEGEQHEKAVELLKAAQGSVKLVVRYTPRVLEEMEARFEKMRSARRRQQHQSYS</sequence>
<protein>
    <recommendedName>
        <fullName>Protein lin-7 homolog B</fullName>
        <shortName>Lin-7B</shortName>
    </recommendedName>
</protein>
<comment type="function">
    <text evidence="1 2">Plays a role in establishing and maintaining the asymmetric distribution of channels and receptors at the plasma membrane of polarized cells. Forms membrane-associated multiprotein complexes that may regulate delivery and recycling of proteins to the correct membrane domains. The tripartite complex composed of LIN7 (LIN7A, LIN7B or LIN7C), CASK and APBA1 associates with the motor protein KIF17 to transport vesicles containing N-methyl-D-aspartate (NMDA) receptor subunit NR2B along microtubules (By similarity). This complex may have the potential to couple synaptic vesicle exocytosis to cell adhesion in brain. Ensures the proper localization of GRIN2B (subunit 2B of the NMDA receptor) to neuronal postsynaptic density and may function in localizing synaptic vesicles at synapses where it is recruited by beta-catenin and cadherin. Required to localize Kir2 channels, GABA transporter (SLC6A12) and EGFR/ERBB1, ERBB2, ERBB3 and ERBB4 to the basolateral membrane of epithelial cells. May increase the amplitude of ASIC3 acid-evoked currents by stabilizing the channel at the cell surface (By similarity).</text>
</comment>
<comment type="subunit">
    <text evidence="2 3 4">Forms a complex with CASK and CASKIN1 (By similarity). Component of the brain-specific heterotrimeric complex (LIN-10-LIN-2-LIN-7 complex) composed of at least APBA1, CASK, and LIN7, which associates with the motor protein KIF17 to transport vesicles along microtubules (By similarity). Forms a heterotrimeric complex composed of MMP5, LIN7B and PATJ; the N-terminal L27 domain of PALS1 interacts with the L27 domain of PATJ and the C-terminal L27 domain of PALS1 interacts with the L27 domain of LIN7B (By similarity). Forms a heterotrimeric complex with DLG1 and CASK via their L27 domains (By similarity). Interacts with DLG4 and GRIN2B as well as CDH1 and CTNNB1, the channels KCNJ12/Kir2.2, KCNJ4/Kir2.3 and probably KCNJ2/Kir2.1 and SLC6A12/BGT-1 via its PDZ domain (By similarity). The association of LIN7A with cadherin and beta-catenin is calcium-dependent, occurs at synaptic junctions and requires the actin cytoskeleton. Interacts with EGFR, ERBB2, ERBB3 and ERBB4 with both PDZ and KID domains (By similarity). Interacts with ASIC3 (By similarity). Interacts with TOPK. Interacts with RTKN (By similarity). Associates with KIF17 via APBA1 (By similarity). Interacts with APBA1 (By similarity). Interacts with MPP7 (By similarity). Interacts with DLG2 (By similarity). Interacts with DLG3 (By similarity).</text>
</comment>
<comment type="subcellular location">
    <subcellularLocation>
        <location evidence="2">Cell membrane</location>
        <topology evidence="2">Peripheral membrane protein</topology>
    </subcellularLocation>
    <subcellularLocation>
        <location evidence="2">Basolateral cell membrane</location>
        <topology evidence="2">Peripheral membrane protein</topology>
    </subcellularLocation>
    <subcellularLocation>
        <location evidence="2">Cell junction</location>
    </subcellularLocation>
    <subcellularLocation>
        <location evidence="2">Postsynaptic density membrane</location>
        <topology evidence="2">Peripheral membrane protein</topology>
    </subcellularLocation>
    <subcellularLocation>
        <location evidence="2">Cell junction</location>
        <location evidence="2">Tight junction</location>
    </subcellularLocation>
    <text evidence="2">Mainly basolateral in renal epithelial cells.</text>
</comment>
<comment type="domain">
    <text evidence="1">The kinase interacting site is required for proper delivery of ERBB2 to the basolateral membrane.</text>
</comment>
<comment type="domain">
    <text evidence="1">The PDZ domain regulates endocytosis and recycling of the receptor at the membrane.</text>
</comment>
<comment type="domain">
    <text evidence="1">The L27 domain mediates interaction with CASK and is involved in the formation of multimeric complexes and the association of LIN7 to membranes.</text>
</comment>
<comment type="similarity">
    <text evidence="7">Belongs to the lin-7 family.</text>
</comment>
<gene>
    <name type="primary">LIN7B</name>
</gene>
<organism>
    <name type="scientific">Bos taurus</name>
    <name type="common">Bovine</name>
    <dbReference type="NCBI Taxonomy" id="9913"/>
    <lineage>
        <taxon>Eukaryota</taxon>
        <taxon>Metazoa</taxon>
        <taxon>Chordata</taxon>
        <taxon>Craniata</taxon>
        <taxon>Vertebrata</taxon>
        <taxon>Euteleostomi</taxon>
        <taxon>Mammalia</taxon>
        <taxon>Eutheria</taxon>
        <taxon>Laurasiatheria</taxon>
        <taxon>Artiodactyla</taxon>
        <taxon>Ruminantia</taxon>
        <taxon>Pecora</taxon>
        <taxon>Bovidae</taxon>
        <taxon>Bovinae</taxon>
        <taxon>Bos</taxon>
    </lineage>
</organism>
<proteinExistence type="evidence at transcript level"/>
<accession>Q2KIB6</accession>